<evidence type="ECO:0000255" key="1">
    <source>
        <dbReference type="HAMAP-Rule" id="MF_04016"/>
    </source>
</evidence>
<gene>
    <name evidence="1" type="primary">MCP</name>
    <name type="synonym">25</name>
</gene>
<name>MCP_SHV21</name>
<organism>
    <name type="scientific">Saimiriine herpesvirus 2 (strain 11)</name>
    <name type="common">SaHV-2</name>
    <name type="synonym">Herpesvirus saimiri</name>
    <dbReference type="NCBI Taxonomy" id="10383"/>
    <lineage>
        <taxon>Viruses</taxon>
        <taxon>Duplodnaviria</taxon>
        <taxon>Heunggongvirae</taxon>
        <taxon>Peploviricota</taxon>
        <taxon>Herviviricetes</taxon>
        <taxon>Herpesvirales</taxon>
        <taxon>Orthoherpesviridae</taxon>
        <taxon>Gammaherpesvirinae</taxon>
        <taxon>Rhadinovirus</taxon>
        <taxon>Rhadinovirus saimiriinegamma2</taxon>
        <taxon>Saimiriine herpesvirus 2</taxon>
    </lineage>
</organism>
<dbReference type="EMBL" id="X64346">
    <property type="protein sequence ID" value="CAA45648.1"/>
    <property type="molecule type" value="Genomic_DNA"/>
</dbReference>
<dbReference type="RefSeq" id="NP_040227.1">
    <property type="nucleotide sequence ID" value="NC_001350.1"/>
</dbReference>
<dbReference type="SMR" id="Q00999"/>
<dbReference type="KEGG" id="vg:1682518"/>
<dbReference type="Proteomes" id="UP000000587">
    <property type="component" value="Segment"/>
</dbReference>
<dbReference type="GO" id="GO:0042025">
    <property type="term" value="C:host cell nucleus"/>
    <property type="evidence" value="ECO:0007669"/>
    <property type="project" value="UniProtKB-SubCell"/>
</dbReference>
<dbReference type="GO" id="GO:0039622">
    <property type="term" value="C:T=16 icosahedral viral capsid"/>
    <property type="evidence" value="ECO:0007669"/>
    <property type="project" value="UniProtKB-KW"/>
</dbReference>
<dbReference type="GO" id="GO:0005198">
    <property type="term" value="F:structural molecule activity"/>
    <property type="evidence" value="ECO:0007669"/>
    <property type="project" value="InterPro"/>
</dbReference>
<dbReference type="HAMAP" id="MF_04016">
    <property type="entry name" value="HSV_MCP"/>
    <property type="match status" value="1"/>
</dbReference>
<dbReference type="InterPro" id="IPR000912">
    <property type="entry name" value="Herpes_MCP"/>
</dbReference>
<dbReference type="InterPro" id="IPR023233">
    <property type="entry name" value="Herpes_MCP_upper_sf"/>
</dbReference>
<dbReference type="Pfam" id="PF03122">
    <property type="entry name" value="Herpes_MCP"/>
    <property type="match status" value="1"/>
</dbReference>
<dbReference type="PRINTS" id="PR00235">
    <property type="entry name" value="HSVCAPSIDMCP"/>
</dbReference>
<dbReference type="SUPFAM" id="SSF103417">
    <property type="entry name" value="Major capsid protein VP5"/>
    <property type="match status" value="1"/>
</dbReference>
<protein>
    <recommendedName>
        <fullName evidence="1">Major capsid protein</fullName>
        <shortName evidence="1">MCP</shortName>
    </recommendedName>
</protein>
<organismHost>
    <name type="scientific">Saimiri sciureus</name>
    <name type="common">Common squirrel monkey</name>
    <dbReference type="NCBI Taxonomy" id="9521"/>
</organismHost>
<sequence>MEVENRPYPYMVSDANLLQQIKESSAEGLFKSFSLLLGKDVRESGVKFEALLGVYTNATQFVKFLETSLAVSCVNTEFKDLKRMTDGKIQFKINVPTIAHGDGRRPQKQKQFIIMKATNKHHIGAEIELSTQDLELLFLSKETPLDVTEYVGAVKTITSALQFGIDALERGLIDTVLTVKLRHAPPLFILKTLADPTYTERGLKKNVKSDLISMFKTHLVNNSFFLDKSEHLPHSRQYVLGILTEMIGAVCKETVFKGISTYSTANGQPISGVLETTDKVMRKLVNVIGQADNSIMGPAAYANYVVRGENLVTAISYGKAMRNFDHFMSKLVDNPTSNLDNDAVDTFESTGSIQKTPISTSVVMVGNKLIALESLQRMYNETQLPYPLNRRMHYTYYFPVGLHLPSPKYSTSMSVKGTENVLHQSVEAWIVNKNNTLQCFNYQNALKSICHPRMNSPILCARALGEAFPDVHNLNIYGIRSEDAHTMNLYQIVYDYYDNKHVAHVHSLAQKSMMTHEEVLHPTNHEILRTEVHPFFDVYAERHQGAAVQYRATHRNLSGNLPPPLAPYSFQECRGYQFEVASGLNHVIDSTTMEIIQETAFDPAYPLLCYIVESMIHGQEEKFVMNIPLIALCIQTYWNNSGRLAFINSFYMLKFICTHMGNGHISKDAYSCYRKIYGELIAIEQSLYRLAGHENVANENIGQLINAILDKDLLPPFAYNDIFTNLLRKSSRHPVVKIGMEEYDDDNDQQNCINIREKMEDLVGNMVNIYQQRNNTDHSRRYVLDVGELQENTYNSVLEKIFYYVLLPVCTNGHVCGMGVDFENVALTLTYNGPVFASAVNQDADILDHLENGTLRDVLVASEIRPTVGMIRRLCTSFLTCPFITQAARIKTDRDPGQNIVTHTDGKYVHQTVLVNGFAAFAIADKSRDAAHCLFYPVPFNKLYCDPMVAATLHPIVAEFITEIPSQRNAVVFNLPPRLIAEYEEWHKSPMSSYVSTCSQTPLSLSTMIAMHLKLSPVSFICQSRHKIHPGFALTAVRTDEVVAEHIMYSSKASTSVFIGQPTVHRKEVRSDAVVFDINHELASLDTALGYSSTIVPAHAAAITTDMGIHCQDLFAMFPSEAYSNQQLNEYIKQKIGSDRVYGMPLRDPREYMGGNRRVTLPGLSHGQLATCEVIMTPVTADITYFQSSNSPRGRASCVVSCDAYNNESAEKFLYDHSLPDPCYEFRSTINPWASQIGSLGDVFFNSQHRQMAGPTLYSPCKQFFNKEAILKNNKLFYTLVTEYVNRLTGAPATSNTDFQYVVINGTDVFLEQPCQFLQEAYPTLSASHRALLDEYMSHKTTHAPVHVNQYLVEEVAPMKRLLKVGNKTVY</sequence>
<feature type="chain" id="PRO_0000115709" description="Major capsid protein">
    <location>
        <begin position="1"/>
        <end position="1371"/>
    </location>
</feature>
<comment type="function">
    <text evidence="1">Self-assembles to form an icosahedral capsid with a T=16 symmetry, about 200 nm in diameter, and consisting of 150 hexons and 12 pentons (total of 162 capsomers). Hexons form the edges and faces of the capsid and are each composed of six MCP molecules. In contrast, one penton is found at each of the 12 vertices. Eleven of the pentons are MCP pentamers, while the last vertex is occupied by the portal complex. The capsid is surrounded by a layer of proteinaceous material designated the tegument which, in turn, is enclosed in an envelope of host cell-derived lipids containing virus-encoded glycoproteins.</text>
</comment>
<comment type="subunit">
    <text evidence="1">Homomultimer. Makes the hexons and eleven out of twelve pentons. Interacts with triplex proteins 1/TRX1 and 2/TRX2; adjacent capsomers are linked together in groups of three by triplexes, heterotrimeric complexes composed of one molecule of TRX1 and two molecules of TRX2. Interacts with scaffold protein; this interaction allows efficient MCP transport to the host nucleus. Interacts with capsid vertex component 2/CVC2. Interacts with the small capsomere-interacting protein/SCP.</text>
</comment>
<comment type="subcellular location">
    <subcellularLocation>
        <location evidence="1">Virion</location>
    </subcellularLocation>
    <subcellularLocation>
        <location evidence="1">Host nucleus</location>
    </subcellularLocation>
</comment>
<comment type="similarity">
    <text evidence="1">Belongs to the herpesviridae major capsid protein family.</text>
</comment>
<keyword id="KW-0167">Capsid protein</keyword>
<keyword id="KW-1048">Host nucleus</keyword>
<keyword id="KW-1185">Reference proteome</keyword>
<keyword id="KW-1147">T=16 icosahedral capsid protein</keyword>
<keyword id="KW-0946">Virion</keyword>
<accession>Q00999</accession>
<proteinExistence type="inferred from homology"/>
<reference key="1">
    <citation type="journal article" date="1992" name="J. Virol.">
        <title>Primary structure of the herpesvirus saimiri genome.</title>
        <authorList>
            <person name="Albrecht J.-C."/>
            <person name="Nicholas J."/>
            <person name="Biller D."/>
            <person name="Cameron K.R."/>
            <person name="Biesinger B."/>
            <person name="Newman C."/>
            <person name="Wittmann S."/>
            <person name="Craxton M.A."/>
            <person name="Coleman H."/>
            <person name="Fleckenstein B."/>
            <person name="Honess R.W."/>
        </authorList>
    </citation>
    <scope>NUCLEOTIDE SEQUENCE [LARGE SCALE GENOMIC DNA]</scope>
</reference>